<dbReference type="EMBL" id="AAFI02000023">
    <property type="protein sequence ID" value="EAL68447.1"/>
    <property type="molecule type" value="Genomic_DNA"/>
</dbReference>
<dbReference type="RefSeq" id="XP_642435.1">
    <property type="nucleotide sequence ID" value="XM_637343.1"/>
</dbReference>
<dbReference type="SMR" id="Q54XW7"/>
<dbReference type="FunCoup" id="Q54XW7">
    <property type="interactions" value="435"/>
</dbReference>
<dbReference type="PaxDb" id="44689-DDB0233880"/>
<dbReference type="EnsemblProtists" id="EAL68447">
    <property type="protein sequence ID" value="EAL68447"/>
    <property type="gene ID" value="DDB_G0278549"/>
</dbReference>
<dbReference type="GeneID" id="8621641"/>
<dbReference type="KEGG" id="ddi:DDB_G0278549"/>
<dbReference type="dictyBase" id="DDB_G0278549">
    <property type="gene designation" value="gacB"/>
</dbReference>
<dbReference type="VEuPathDB" id="AmoebaDB:DDB_G0278549"/>
<dbReference type="eggNOG" id="ENOG502RCUZ">
    <property type="taxonomic scope" value="Eukaryota"/>
</dbReference>
<dbReference type="HOGENOM" id="CLU_1020941_0_0_1"/>
<dbReference type="InParanoid" id="Q54XW7"/>
<dbReference type="OMA" id="STIMEFE"/>
<dbReference type="PhylomeDB" id="Q54XW7"/>
<dbReference type="PRO" id="PR:Q54XW7"/>
<dbReference type="Proteomes" id="UP000002195">
    <property type="component" value="Chromosome 3"/>
</dbReference>
<dbReference type="GO" id="GO:0005737">
    <property type="term" value="C:cytoplasm"/>
    <property type="evidence" value="ECO:0007669"/>
    <property type="project" value="UniProtKB-SubCell"/>
</dbReference>
<dbReference type="GO" id="GO:0005096">
    <property type="term" value="F:GTPase activator activity"/>
    <property type="evidence" value="ECO:0007669"/>
    <property type="project" value="UniProtKB-KW"/>
</dbReference>
<dbReference type="GO" id="GO:0007165">
    <property type="term" value="P:signal transduction"/>
    <property type="evidence" value="ECO:0007669"/>
    <property type="project" value="InterPro"/>
</dbReference>
<dbReference type="CDD" id="cd00159">
    <property type="entry name" value="RhoGAP"/>
    <property type="match status" value="1"/>
</dbReference>
<dbReference type="Gene3D" id="1.10.555.10">
    <property type="entry name" value="Rho GTPase activation protein"/>
    <property type="match status" value="1"/>
</dbReference>
<dbReference type="InterPro" id="IPR008936">
    <property type="entry name" value="Rho_GTPase_activation_prot"/>
</dbReference>
<dbReference type="InterPro" id="IPR000198">
    <property type="entry name" value="RhoGAP_dom"/>
</dbReference>
<dbReference type="Pfam" id="PF00620">
    <property type="entry name" value="RhoGAP"/>
    <property type="match status" value="1"/>
</dbReference>
<dbReference type="SMART" id="SM00324">
    <property type="entry name" value="RhoGAP"/>
    <property type="match status" value="1"/>
</dbReference>
<dbReference type="SUPFAM" id="SSF48350">
    <property type="entry name" value="GTPase activation domain, GAP"/>
    <property type="match status" value="1"/>
</dbReference>
<dbReference type="PROSITE" id="PS50238">
    <property type="entry name" value="RHOGAP"/>
    <property type="match status" value="1"/>
</dbReference>
<protein>
    <recommendedName>
        <fullName>Rho GTPase-activating protein gacB</fullName>
    </recommendedName>
    <alternativeName>
        <fullName>GTPase activating factor for raC protein B</fullName>
    </alternativeName>
</protein>
<proteinExistence type="inferred from homology"/>
<feature type="chain" id="PRO_0000380194" description="Rho GTPase-activating protein gacB">
    <location>
        <begin position="1"/>
        <end position="273"/>
    </location>
</feature>
<feature type="domain" description="Rho-GAP" evidence="2">
    <location>
        <begin position="1"/>
        <end position="192"/>
    </location>
</feature>
<feature type="site" description="Arginine finger; crucial for GTP hydrolysis by stabilizing the transition state" evidence="2">
    <location>
        <position position="34"/>
    </location>
</feature>
<gene>
    <name type="primary">gacB</name>
    <name type="ORF">DDB_G0278549</name>
</gene>
<organism>
    <name type="scientific">Dictyostelium discoideum</name>
    <name type="common">Social amoeba</name>
    <dbReference type="NCBI Taxonomy" id="44689"/>
    <lineage>
        <taxon>Eukaryota</taxon>
        <taxon>Amoebozoa</taxon>
        <taxon>Evosea</taxon>
        <taxon>Eumycetozoa</taxon>
        <taxon>Dictyostelia</taxon>
        <taxon>Dictyosteliales</taxon>
        <taxon>Dictyosteliaceae</taxon>
        <taxon>Dictyostelium</taxon>
    </lineage>
</organism>
<keyword id="KW-0963">Cytoplasm</keyword>
<keyword id="KW-0343">GTPase activation</keyword>
<keyword id="KW-1185">Reference proteome</keyword>
<accession>Q54XW7</accession>
<comment type="function">
    <text evidence="1">Rho GTPase-activating protein involved in the signal transduction pathway.</text>
</comment>
<comment type="subcellular location">
    <subcellularLocation>
        <location evidence="1">Cytoplasm</location>
    </subcellularLocation>
</comment>
<evidence type="ECO:0000250" key="1"/>
<evidence type="ECO:0000255" key="2">
    <source>
        <dbReference type="PROSITE-ProRule" id="PRU00172"/>
    </source>
</evidence>
<sequence>MTDQTLRLENVSPYLLLILDYFEKNCINKTDLFSIQGNQENVNRIISNIKNFTPTKQFEKDLNRGLYSRHDLSFSIINILNSLNHPLLLENYNEAYIVNAYYEDIERIKQTLLELPHSNLEIILKLFSTFNLLCNQEEHKSFLLLSPEMLGETFAFVLMRFKKTKDEVDQFGNKIFATNVISYLISHFNEIFDSTILDFEQKEKKSRENAILFMEYAMRKYTSLDNHFKSIYNKYIPHKRDLSQEDVQTIKTEFNLRKYSGKSKIRPPIPIYM</sequence>
<name>GACB_DICDI</name>
<reference key="1">
    <citation type="journal article" date="2005" name="Nature">
        <title>The genome of the social amoeba Dictyostelium discoideum.</title>
        <authorList>
            <person name="Eichinger L."/>
            <person name="Pachebat J.A."/>
            <person name="Gloeckner G."/>
            <person name="Rajandream M.A."/>
            <person name="Sucgang R."/>
            <person name="Berriman M."/>
            <person name="Song J."/>
            <person name="Olsen R."/>
            <person name="Szafranski K."/>
            <person name="Xu Q."/>
            <person name="Tunggal B."/>
            <person name="Kummerfeld S."/>
            <person name="Madera M."/>
            <person name="Konfortov B.A."/>
            <person name="Rivero F."/>
            <person name="Bankier A.T."/>
            <person name="Lehmann R."/>
            <person name="Hamlin N."/>
            <person name="Davies R."/>
            <person name="Gaudet P."/>
            <person name="Fey P."/>
            <person name="Pilcher K."/>
            <person name="Chen G."/>
            <person name="Saunders D."/>
            <person name="Sodergren E.J."/>
            <person name="Davis P."/>
            <person name="Kerhornou A."/>
            <person name="Nie X."/>
            <person name="Hall N."/>
            <person name="Anjard C."/>
            <person name="Hemphill L."/>
            <person name="Bason N."/>
            <person name="Farbrother P."/>
            <person name="Desany B."/>
            <person name="Just E."/>
            <person name="Morio T."/>
            <person name="Rost R."/>
            <person name="Churcher C.M."/>
            <person name="Cooper J."/>
            <person name="Haydock S."/>
            <person name="van Driessche N."/>
            <person name="Cronin A."/>
            <person name="Goodhead I."/>
            <person name="Muzny D.M."/>
            <person name="Mourier T."/>
            <person name="Pain A."/>
            <person name="Lu M."/>
            <person name="Harper D."/>
            <person name="Lindsay R."/>
            <person name="Hauser H."/>
            <person name="James K.D."/>
            <person name="Quiles M."/>
            <person name="Madan Babu M."/>
            <person name="Saito T."/>
            <person name="Buchrieser C."/>
            <person name="Wardroper A."/>
            <person name="Felder M."/>
            <person name="Thangavelu M."/>
            <person name="Johnson D."/>
            <person name="Knights A."/>
            <person name="Loulseged H."/>
            <person name="Mungall K.L."/>
            <person name="Oliver K."/>
            <person name="Price C."/>
            <person name="Quail M.A."/>
            <person name="Urushihara H."/>
            <person name="Hernandez J."/>
            <person name="Rabbinowitsch E."/>
            <person name="Steffen D."/>
            <person name="Sanders M."/>
            <person name="Ma J."/>
            <person name="Kohara Y."/>
            <person name="Sharp S."/>
            <person name="Simmonds M.N."/>
            <person name="Spiegler S."/>
            <person name="Tivey A."/>
            <person name="Sugano S."/>
            <person name="White B."/>
            <person name="Walker D."/>
            <person name="Woodward J.R."/>
            <person name="Winckler T."/>
            <person name="Tanaka Y."/>
            <person name="Shaulsky G."/>
            <person name="Schleicher M."/>
            <person name="Weinstock G.M."/>
            <person name="Rosenthal A."/>
            <person name="Cox E.C."/>
            <person name="Chisholm R.L."/>
            <person name="Gibbs R.A."/>
            <person name="Loomis W.F."/>
            <person name="Platzer M."/>
            <person name="Kay R.R."/>
            <person name="Williams J.G."/>
            <person name="Dear P.H."/>
            <person name="Noegel A.A."/>
            <person name="Barrell B.G."/>
            <person name="Kuspa A."/>
        </authorList>
    </citation>
    <scope>NUCLEOTIDE SEQUENCE [LARGE SCALE GENOMIC DNA]</scope>
    <source>
        <strain>AX4</strain>
    </source>
</reference>